<proteinExistence type="evidence at protein level"/>
<evidence type="ECO:0000255" key="1"/>
<evidence type="ECO:0000255" key="2">
    <source>
        <dbReference type="PROSITE-ProRule" id="PRU00214"/>
    </source>
</evidence>
<evidence type="ECO:0000256" key="3">
    <source>
        <dbReference type="SAM" id="MobiDB-lite"/>
    </source>
</evidence>
<evidence type="ECO:0000269" key="4">
    <source>
    </source>
</evidence>
<evidence type="ECO:0000269" key="5">
    <source>
    </source>
</evidence>
<evidence type="ECO:0000269" key="6">
    <source>
    </source>
</evidence>
<evidence type="ECO:0000269" key="7">
    <source>
    </source>
</evidence>
<evidence type="ECO:0000269" key="8">
    <source>
    </source>
</evidence>
<evidence type="ECO:0000305" key="9"/>
<evidence type="ECO:0000305" key="10">
    <source>
    </source>
</evidence>
<evidence type="ECO:0000305" key="11">
    <source>
    </source>
</evidence>
<comment type="function">
    <text evidence="4 5 7">Pre-mRNA splicing factor required for splicing and for the turnover of unstable transcripts. May be a U5 snRNP-associated protein involved in the formation of U4/U6-U5 tri-snRNP. Involved in responses to abiotic stresses. Involved in microRNAs (miRNAs) biogenesis by functioning in primary miRNAs (pri-miRNAs) splicing. Required for DNA methylation and transcriptional silencing through the RNA-directed DNA methylation (RdDM) pathway.</text>
</comment>
<comment type="subunit">
    <text evidence="6 7 8">Component of a pre-mRNA splicing complex (PubMed:23877244). Interacts with ZOP1 (PubMed:23524848). Interacts with PRP31 (PubMed:25684655).</text>
</comment>
<comment type="interaction">
    <interactant intactId="EBI-6921761">
        <id>Q9ZT71</id>
    </interactant>
    <interactant intactId="EBI-4429233">
        <id>Q7XA66</id>
        <label>ZOP1</label>
    </interactant>
    <organismsDiffer>false</organismsDiffer>
    <experiments>2</experiments>
</comment>
<comment type="subcellular location">
    <subcellularLocation>
        <location evidence="4 8">Nucleus</location>
    </subcellularLocation>
    <subcellularLocation>
        <location evidence="7 8">Nucleus</location>
        <location evidence="7 8">Cajal body</location>
    </subcellularLocation>
</comment>
<comment type="tissue specificity">
    <text evidence="4">Ubiquitous.</text>
</comment>
<comment type="induction">
    <text evidence="4">Up-regulated by cold stress, but not by abscisic acid or salt treatment.</text>
</comment>
<comment type="disruption phenotype">
    <text evidence="4">Lethal when homozygous.</text>
</comment>
<comment type="miscellaneous">
    <text evidence="10 11">The sta1-1 mutation causes the stabilization of the normally unstable STA1 transcript (PubMed:16751345) and increases the expression levels of miRNA target genes (PubMed:23268445).</text>
</comment>
<gene>
    <name type="primary">STA1</name>
    <name type="synonym">EMB2770</name>
    <name type="ordered locus">At4g03430</name>
    <name type="ORF">F9H3.5</name>
</gene>
<keyword id="KW-0175">Coiled coil</keyword>
<keyword id="KW-1017">Isopeptide bond</keyword>
<keyword id="KW-0507">mRNA processing</keyword>
<keyword id="KW-0508">mRNA splicing</keyword>
<keyword id="KW-0539">Nucleus</keyword>
<keyword id="KW-1185">Reference proteome</keyword>
<keyword id="KW-0677">Repeat</keyword>
<keyword id="KW-0747">Spliceosome</keyword>
<keyword id="KW-0802">TPR repeat</keyword>
<feature type="chain" id="PRO_0000429843" description="Protein STABILIZED1">
    <location>
        <begin position="1"/>
        <end position="1029"/>
    </location>
</feature>
<feature type="domain" description="Ubiquitin-like" evidence="2">
    <location>
        <begin position="1"/>
        <end position="85"/>
    </location>
</feature>
<feature type="repeat" description="HAT 1">
    <location>
        <begin position="367"/>
        <end position="399"/>
    </location>
</feature>
<feature type="repeat" description="HAT 2">
    <location>
        <begin position="401"/>
        <end position="431"/>
    </location>
</feature>
<feature type="repeat" description="HAT 3">
    <location>
        <begin position="432"/>
        <end position="462"/>
    </location>
</feature>
<feature type="repeat" description="HAT 4">
    <location>
        <begin position="463"/>
        <end position="494"/>
    </location>
</feature>
<feature type="repeat" description="HAT 5">
    <location>
        <begin position="496"/>
        <end position="524"/>
    </location>
</feature>
<feature type="repeat" description="HAT 6">
    <location>
        <begin position="526"/>
        <end position="554"/>
    </location>
</feature>
<feature type="repeat" description="TPR 1">
    <location>
        <begin position="625"/>
        <end position="658"/>
    </location>
</feature>
<feature type="repeat" description="HAT 7">
    <location>
        <begin position="639"/>
        <end position="671"/>
    </location>
</feature>
<feature type="repeat" description="HAT 8">
    <location>
        <begin position="673"/>
        <end position="705"/>
    </location>
</feature>
<feature type="repeat" description="HAT 9">
    <location>
        <begin position="707"/>
        <end position="739"/>
    </location>
</feature>
<feature type="repeat" description="HAT 10">
    <location>
        <begin position="741"/>
        <end position="772"/>
    </location>
</feature>
<feature type="repeat" description="HAT 11">
    <location>
        <begin position="774"/>
        <end position="806"/>
    </location>
</feature>
<feature type="repeat" description="TPR 2">
    <location>
        <begin position="794"/>
        <end position="827"/>
    </location>
</feature>
<feature type="repeat" description="HAT 12">
    <location>
        <begin position="808"/>
        <end position="840"/>
    </location>
</feature>
<feature type="repeat" description="HAT 13">
    <location>
        <begin position="842"/>
        <end position="874"/>
    </location>
</feature>
<feature type="repeat" description="HAT 14">
    <location>
        <begin position="876"/>
        <end position="908"/>
    </location>
</feature>
<feature type="repeat" description="TPR 3">
    <location>
        <begin position="926"/>
        <end position="959"/>
    </location>
</feature>
<feature type="repeat" description="HAT 15">
    <location>
        <begin position="940"/>
        <end position="972"/>
    </location>
</feature>
<feature type="region of interest" description="Disordered" evidence="3">
    <location>
        <begin position="142"/>
        <end position="170"/>
    </location>
</feature>
<feature type="coiled-coil region" evidence="1">
    <location>
        <begin position="210"/>
        <end position="243"/>
    </location>
</feature>
<feature type="cross-link" description="Glycyl lysine isopeptide (Gly-Lys) (interchain with K-? in acceptor proteins)">
    <location>
        <position position="85"/>
    </location>
</feature>
<feature type="mutagenesis site" description="Suppresses the transcriptional silencing of RdDM targets." evidence="7">
    <original>G</original>
    <variation>D</variation>
    <location>
        <position position="413"/>
    </location>
</feature>
<feature type="mutagenesis site" description="In sta1-1; delayed growth, sensitivity to cold and hypersensitivity to abscisic acid. Stabilizes its own transcript." evidence="4">
    <location>
        <begin position="417"/>
        <end position="418"/>
    </location>
</feature>
<feature type="sequence conflict" description="In Ref. 4; BAE98809." evidence="9" ref="4">
    <original>R</original>
    <variation>C</variation>
    <location>
        <position position="72"/>
    </location>
</feature>
<feature type="sequence conflict" description="In Ref. 4; BAE98809." evidence="9" ref="4">
    <original>V</original>
    <variation>A</variation>
    <location>
        <position position="619"/>
    </location>
</feature>
<reference key="1">
    <citation type="journal article" date="1999" name="Nature">
        <title>Sequence and analysis of chromosome 4 of the plant Arabidopsis thaliana.</title>
        <authorList>
            <person name="Mayer K.F.X."/>
            <person name="Schueller C."/>
            <person name="Wambutt R."/>
            <person name="Murphy G."/>
            <person name="Volckaert G."/>
            <person name="Pohl T."/>
            <person name="Duesterhoeft A."/>
            <person name="Stiekema W."/>
            <person name="Entian K.-D."/>
            <person name="Terryn N."/>
            <person name="Harris B."/>
            <person name="Ansorge W."/>
            <person name="Brandt P."/>
            <person name="Grivell L.A."/>
            <person name="Rieger M."/>
            <person name="Weichselgartner M."/>
            <person name="de Simone V."/>
            <person name="Obermaier B."/>
            <person name="Mache R."/>
            <person name="Mueller M."/>
            <person name="Kreis M."/>
            <person name="Delseny M."/>
            <person name="Puigdomenech P."/>
            <person name="Watson M."/>
            <person name="Schmidtheini T."/>
            <person name="Reichert B."/>
            <person name="Portetelle D."/>
            <person name="Perez-Alonso M."/>
            <person name="Boutry M."/>
            <person name="Bancroft I."/>
            <person name="Vos P."/>
            <person name="Hoheisel J."/>
            <person name="Zimmermann W."/>
            <person name="Wedler H."/>
            <person name="Ridley P."/>
            <person name="Langham S.-A."/>
            <person name="McCullagh B."/>
            <person name="Bilham L."/>
            <person name="Robben J."/>
            <person name="van der Schueren J."/>
            <person name="Grymonprez B."/>
            <person name="Chuang Y.-J."/>
            <person name="Vandenbussche F."/>
            <person name="Braeken M."/>
            <person name="Weltjens I."/>
            <person name="Voet M."/>
            <person name="Bastiaens I."/>
            <person name="Aert R."/>
            <person name="Defoor E."/>
            <person name="Weitzenegger T."/>
            <person name="Bothe G."/>
            <person name="Ramsperger U."/>
            <person name="Hilbert H."/>
            <person name="Braun M."/>
            <person name="Holzer E."/>
            <person name="Brandt A."/>
            <person name="Peters S."/>
            <person name="van Staveren M."/>
            <person name="Dirkse W."/>
            <person name="Mooijman P."/>
            <person name="Klein Lankhorst R."/>
            <person name="Rose M."/>
            <person name="Hauf J."/>
            <person name="Koetter P."/>
            <person name="Berneiser S."/>
            <person name="Hempel S."/>
            <person name="Feldpausch M."/>
            <person name="Lamberth S."/>
            <person name="Van den Daele H."/>
            <person name="De Keyser A."/>
            <person name="Buysshaert C."/>
            <person name="Gielen J."/>
            <person name="Villarroel R."/>
            <person name="De Clercq R."/>
            <person name="van Montagu M."/>
            <person name="Rogers J."/>
            <person name="Cronin A."/>
            <person name="Quail M.A."/>
            <person name="Bray-Allen S."/>
            <person name="Clark L."/>
            <person name="Doggett J."/>
            <person name="Hall S."/>
            <person name="Kay M."/>
            <person name="Lennard N."/>
            <person name="McLay K."/>
            <person name="Mayes R."/>
            <person name="Pettett A."/>
            <person name="Rajandream M.A."/>
            <person name="Lyne M."/>
            <person name="Benes V."/>
            <person name="Rechmann S."/>
            <person name="Borkova D."/>
            <person name="Bloecker H."/>
            <person name="Scharfe M."/>
            <person name="Grimm M."/>
            <person name="Loehnert T.-H."/>
            <person name="Dose S."/>
            <person name="de Haan M."/>
            <person name="Maarse A.C."/>
            <person name="Schaefer M."/>
            <person name="Mueller-Auer S."/>
            <person name="Gabel C."/>
            <person name="Fuchs M."/>
            <person name="Fartmann B."/>
            <person name="Granderath K."/>
            <person name="Dauner D."/>
            <person name="Herzl A."/>
            <person name="Neumann S."/>
            <person name="Argiriou A."/>
            <person name="Vitale D."/>
            <person name="Liguori R."/>
            <person name="Piravandi E."/>
            <person name="Massenet O."/>
            <person name="Quigley F."/>
            <person name="Clabauld G."/>
            <person name="Muendlein A."/>
            <person name="Felber R."/>
            <person name="Schnabl S."/>
            <person name="Hiller R."/>
            <person name="Schmidt W."/>
            <person name="Lecharny A."/>
            <person name="Aubourg S."/>
            <person name="Chefdor F."/>
            <person name="Cooke R."/>
            <person name="Berger C."/>
            <person name="Monfort A."/>
            <person name="Casacuberta E."/>
            <person name="Gibbons T."/>
            <person name="Weber N."/>
            <person name="Vandenbol M."/>
            <person name="Bargues M."/>
            <person name="Terol J."/>
            <person name="Torres A."/>
            <person name="Perez-Perez A."/>
            <person name="Purnelle B."/>
            <person name="Bent E."/>
            <person name="Johnson S."/>
            <person name="Tacon D."/>
            <person name="Jesse T."/>
            <person name="Heijnen L."/>
            <person name="Schwarz S."/>
            <person name="Scholler P."/>
            <person name="Heber S."/>
            <person name="Francs P."/>
            <person name="Bielke C."/>
            <person name="Frishman D."/>
            <person name="Haase D."/>
            <person name="Lemcke K."/>
            <person name="Mewes H.-W."/>
            <person name="Stocker S."/>
            <person name="Zaccaria P."/>
            <person name="Bevan M."/>
            <person name="Wilson R.K."/>
            <person name="de la Bastide M."/>
            <person name="Habermann K."/>
            <person name="Parnell L."/>
            <person name="Dedhia N."/>
            <person name="Gnoj L."/>
            <person name="Schutz K."/>
            <person name="Huang E."/>
            <person name="Spiegel L."/>
            <person name="Sekhon M."/>
            <person name="Murray J."/>
            <person name="Sheet P."/>
            <person name="Cordes M."/>
            <person name="Abu-Threideh J."/>
            <person name="Stoneking T."/>
            <person name="Kalicki J."/>
            <person name="Graves T."/>
            <person name="Harmon G."/>
            <person name="Edwards J."/>
            <person name="Latreille P."/>
            <person name="Courtney L."/>
            <person name="Cloud J."/>
            <person name="Abbott A."/>
            <person name="Scott K."/>
            <person name="Johnson D."/>
            <person name="Minx P."/>
            <person name="Bentley D."/>
            <person name="Fulton B."/>
            <person name="Miller N."/>
            <person name="Greco T."/>
            <person name="Kemp K."/>
            <person name="Kramer J."/>
            <person name="Fulton L."/>
            <person name="Mardis E."/>
            <person name="Dante M."/>
            <person name="Pepin K."/>
            <person name="Hillier L.W."/>
            <person name="Nelson J."/>
            <person name="Spieth J."/>
            <person name="Ryan E."/>
            <person name="Andrews S."/>
            <person name="Geisel C."/>
            <person name="Layman D."/>
            <person name="Du H."/>
            <person name="Ali J."/>
            <person name="Berghoff A."/>
            <person name="Jones K."/>
            <person name="Drone K."/>
            <person name="Cotton M."/>
            <person name="Joshu C."/>
            <person name="Antonoiu B."/>
            <person name="Zidanic M."/>
            <person name="Strong C."/>
            <person name="Sun H."/>
            <person name="Lamar B."/>
            <person name="Yordan C."/>
            <person name="Ma P."/>
            <person name="Zhong J."/>
            <person name="Preston R."/>
            <person name="Vil D."/>
            <person name="Shekher M."/>
            <person name="Matero A."/>
            <person name="Shah R."/>
            <person name="Swaby I.K."/>
            <person name="O'Shaughnessy A."/>
            <person name="Rodriguez M."/>
            <person name="Hoffman J."/>
            <person name="Till S."/>
            <person name="Granat S."/>
            <person name="Shohdy N."/>
            <person name="Hasegawa A."/>
            <person name="Hameed A."/>
            <person name="Lodhi M."/>
            <person name="Johnson A."/>
            <person name="Chen E."/>
            <person name="Marra M.A."/>
            <person name="Martienssen R."/>
            <person name="McCombie W.R."/>
        </authorList>
    </citation>
    <scope>NUCLEOTIDE SEQUENCE [LARGE SCALE GENOMIC DNA]</scope>
    <source>
        <strain>cv. Columbia</strain>
    </source>
</reference>
<reference key="2">
    <citation type="journal article" date="2017" name="Plant J.">
        <title>Araport11: a complete reannotation of the Arabidopsis thaliana reference genome.</title>
        <authorList>
            <person name="Cheng C.Y."/>
            <person name="Krishnakumar V."/>
            <person name="Chan A.P."/>
            <person name="Thibaud-Nissen F."/>
            <person name="Schobel S."/>
            <person name="Town C.D."/>
        </authorList>
    </citation>
    <scope>GENOME REANNOTATION</scope>
    <source>
        <strain>cv. Columbia</strain>
    </source>
</reference>
<reference key="3">
    <citation type="journal article" date="2003" name="Science">
        <title>Empirical analysis of transcriptional activity in the Arabidopsis genome.</title>
        <authorList>
            <person name="Yamada K."/>
            <person name="Lim J."/>
            <person name="Dale J.M."/>
            <person name="Chen H."/>
            <person name="Shinn P."/>
            <person name="Palm C.J."/>
            <person name="Southwick A.M."/>
            <person name="Wu H.C."/>
            <person name="Kim C.J."/>
            <person name="Nguyen M."/>
            <person name="Pham P.K."/>
            <person name="Cheuk R.F."/>
            <person name="Karlin-Newmann G."/>
            <person name="Liu S.X."/>
            <person name="Lam B."/>
            <person name="Sakano H."/>
            <person name="Wu T."/>
            <person name="Yu G."/>
            <person name="Miranda M."/>
            <person name="Quach H.L."/>
            <person name="Tripp M."/>
            <person name="Chang C.H."/>
            <person name="Lee J.M."/>
            <person name="Toriumi M.J."/>
            <person name="Chan M.M."/>
            <person name="Tang C.C."/>
            <person name="Onodera C.S."/>
            <person name="Deng J.M."/>
            <person name="Akiyama K."/>
            <person name="Ansari Y."/>
            <person name="Arakawa T."/>
            <person name="Banh J."/>
            <person name="Banno F."/>
            <person name="Bowser L."/>
            <person name="Brooks S.Y."/>
            <person name="Carninci P."/>
            <person name="Chao Q."/>
            <person name="Choy N."/>
            <person name="Enju A."/>
            <person name="Goldsmith A.D."/>
            <person name="Gurjal M."/>
            <person name="Hansen N.F."/>
            <person name="Hayashizaki Y."/>
            <person name="Johnson-Hopson C."/>
            <person name="Hsuan V.W."/>
            <person name="Iida K."/>
            <person name="Karnes M."/>
            <person name="Khan S."/>
            <person name="Koesema E."/>
            <person name="Ishida J."/>
            <person name="Jiang P.X."/>
            <person name="Jones T."/>
            <person name="Kawai J."/>
            <person name="Kamiya A."/>
            <person name="Meyers C."/>
            <person name="Nakajima M."/>
            <person name="Narusaka M."/>
            <person name="Seki M."/>
            <person name="Sakurai T."/>
            <person name="Satou M."/>
            <person name="Tamse R."/>
            <person name="Vaysberg M."/>
            <person name="Wallender E.K."/>
            <person name="Wong C."/>
            <person name="Yamamura Y."/>
            <person name="Yuan S."/>
            <person name="Shinozaki K."/>
            <person name="Davis R.W."/>
            <person name="Theologis A."/>
            <person name="Ecker J.R."/>
        </authorList>
    </citation>
    <scope>NUCLEOTIDE SEQUENCE [LARGE SCALE MRNA]</scope>
    <source>
        <strain>cv. Columbia</strain>
    </source>
</reference>
<reference key="4">
    <citation type="submission" date="2006-07" db="EMBL/GenBank/DDBJ databases">
        <title>Large-scale analysis of RIKEN Arabidopsis full-length (RAFL) cDNAs.</title>
        <authorList>
            <person name="Totoki Y."/>
            <person name="Seki M."/>
            <person name="Ishida J."/>
            <person name="Nakajima M."/>
            <person name="Enju A."/>
            <person name="Kamiya A."/>
            <person name="Narusaka M."/>
            <person name="Shin-i T."/>
            <person name="Nakagawa M."/>
            <person name="Sakamoto N."/>
            <person name="Oishi K."/>
            <person name="Kohara Y."/>
            <person name="Kobayashi M."/>
            <person name="Toyoda A."/>
            <person name="Sakaki Y."/>
            <person name="Sakurai T."/>
            <person name="Iida K."/>
            <person name="Akiyama K."/>
            <person name="Satou M."/>
            <person name="Toyoda T."/>
            <person name="Konagaya A."/>
            <person name="Carninci P."/>
            <person name="Kawai J."/>
            <person name="Hayashizaki Y."/>
            <person name="Shinozaki K."/>
        </authorList>
    </citation>
    <scope>NUCLEOTIDE SEQUENCE [LARGE SCALE MRNA] OF 8-619</scope>
    <source>
        <strain>cv. Columbia</strain>
    </source>
</reference>
<reference key="5">
    <citation type="journal article" date="2006" name="Plant Cell">
        <title>STABILIZED1, a stress-upregulated nuclear protein, is required for pre-mRNA splicing, mRNA turnover, and stress tolerance in Arabidopsis.</title>
        <authorList>
            <person name="Lee B.H."/>
            <person name="Kapoor A."/>
            <person name="Zhu J."/>
            <person name="Zhu J.K."/>
        </authorList>
    </citation>
    <scope>FUNCTION</scope>
    <scope>DISRUPTION PHENOTYPE</scope>
    <scope>MUTAGENESIS OF 417-CYS-PRO-418</scope>
    <scope>INDUCTION BY ABIOTIC STRESS</scope>
    <scope>SUBCELLULAR LOCATION</scope>
    <scope>TISSUE SPECIFICITY</scope>
    <source>
        <strain>cv. Columbia</strain>
    </source>
</reference>
<reference key="6">
    <citation type="journal article" date="2013" name="Nucleic Acids Res.">
        <title>STA1, an Arabidopsis pre-mRNA processing factor 6 homolog, is a new player involved in miRNA biogenesis.</title>
        <authorList>
            <person name="Ben Chaabane S."/>
            <person name="Liu R."/>
            <person name="Chinnusamy V."/>
            <person name="Kwon Y."/>
            <person name="Park J.H."/>
            <person name="Kim S.Y."/>
            <person name="Zhu J.K."/>
            <person name="Yang S.W."/>
            <person name="Lee B.H."/>
        </authorList>
    </citation>
    <scope>FUNCTION</scope>
</reference>
<reference key="7">
    <citation type="journal article" date="2013" name="Nucleic Acids Res.">
        <title>The PRP6-like splicing factor STA1 is involved in RNA-directed DNA methylation by facilitating the production of Pol V-dependent scaffold RNAs.</title>
        <authorList>
            <person name="Dou K."/>
            <person name="Huang C.F."/>
            <person name="Ma Z.Y."/>
            <person name="Zhang C.J."/>
            <person name="Zhou J.X."/>
            <person name="Huang H.W."/>
            <person name="Cai T."/>
            <person name="Tang K."/>
            <person name="Zhu J.K."/>
            <person name="He X.J."/>
        </authorList>
    </citation>
    <scope>FUNCTION</scope>
    <scope>MUTAGENESIS OF GLY-413</scope>
    <scope>SUBCELLULAR LOCATION</scope>
    <scope>IDENTIFICATION IN PRE-MRNA SPLICING COMPLEX</scope>
    <source>
        <strain>cv. C24</strain>
    </source>
</reference>
<reference key="8">
    <citation type="journal article" date="2013" name="EMBO J.">
        <title>The splicing machinery promotes RNA-directed DNA methylation and transcriptional silencing in Arabidopsis.</title>
        <authorList>
            <person name="Zhang C.J."/>
            <person name="Zhou J.X."/>
            <person name="Liu J."/>
            <person name="Ma Z.Y."/>
            <person name="Zhang S.W."/>
            <person name="Dou K."/>
            <person name="Huang H.W."/>
            <person name="Cai T."/>
            <person name="Liu R."/>
            <person name="Zhu J.K."/>
            <person name="He X.J."/>
        </authorList>
    </citation>
    <scope>INTERACTION WITH ZOP1</scope>
</reference>
<reference key="9">
    <citation type="journal article" date="2015" name="Mol. Plant">
        <title>The splicing factor PRP31 is involved in transcriptional gene silencing and stress response in Arabidopsis.</title>
        <authorList>
            <person name="Du J.L."/>
            <person name="Zhang S.W."/>
            <person name="Huang H.W."/>
            <person name="Cai T."/>
            <person name="Li L."/>
            <person name="Chen S."/>
            <person name="He X.J."/>
        </authorList>
    </citation>
    <scope>INTERACTION WITH PRP31</scope>
    <scope>SUBCELLULAR LOCATION</scope>
</reference>
<accession>Q9ZT71</accession>
<accession>Q0WVN9</accession>
<sequence>MVFLSIPNGKTLSIDVNPNSTTISAFEQLAHQRSDVPQSFLRYSLRMRNPSRVFVDSKDSDSILLSDLGVSRFSTVIIHVLLLGGMQAAPPKPRLDFLNSKPPSNYVAGLGRGATGFTTRSDIGPARAAPDLPDRSALATAAAPGVGRGAGKPSEAEAEDDEEAEEKRYDENQTFDEFEGNDVGLFANAEYDEDDKEADAIWESIDQRMDSRRKDRREAKLKEEIEKYRASNPKITEQFADLKRKLHTLSADEWDSIPEIGDYSLRNKKKKFESFVPIPDTLLEKAKKEKELVMALDPKSRAAGGSETPWGQTPVTDLTAVGEGRGTVLSLKLDNLSDSVSGQTVVDPKGYLTDLKSMKRTTDEEIYDRNRARLLYKSLTQSNPKNPNGWIAAARVEEVDGKIKAARFQIQRGCEECPKNEDVWLEACRLANPEDAKGVIAKGVKLIPNSVKLWLEAAKLEHDVENKSRVLRKGLEHIPDSVRLWKAVVELANEEDARILLHRAVECCPLHLELWVALARLETYAESKKVLNKAREKLPKEPAIWITAAKLEEANGKLDEANDNTAMVGKIIDRGIKTLQREGVVIDRENWMSEAEACERVGSVATCQAIIKNTIGIGVEEEDRKRTWVADADECKKRGSIETARAIYAHALSVFLTKKSIWLKAAQLEKSHGSRESLDALLRKAVTYVPQAEVLWLMGAKEKWLAGDVPAARAILQEAYAAIPNSEEIWLAAFKLEFENKEPERARMLLAKARERGGTERVWMKSAIVERELGNVEEERRLLNEGLKQFPTFFKLWLMLGQLEERFKHLEQARKAYDTGLKHCPHCIPLWLSLADLEEKVNGLNKARAILTTARKKNPGGAELWLAAIRAELRHDNKREAEHLMSKALQDCPKSGILWAADIEMAPRPRRKTKSIDAMKKCDRDPHVTIAVAKLFWQDKKVEKARAWFERAVTVGPDIGDFWALFYKFELQHGSDEDRKEVVAKCVACEPKHGEKWQAISKAVENAHQPIEVILKRVVNALSKEENSA</sequence>
<name>STA1_ARATH</name>
<organism>
    <name type="scientific">Arabidopsis thaliana</name>
    <name type="common">Mouse-ear cress</name>
    <dbReference type="NCBI Taxonomy" id="3702"/>
    <lineage>
        <taxon>Eukaryota</taxon>
        <taxon>Viridiplantae</taxon>
        <taxon>Streptophyta</taxon>
        <taxon>Embryophyta</taxon>
        <taxon>Tracheophyta</taxon>
        <taxon>Spermatophyta</taxon>
        <taxon>Magnoliopsida</taxon>
        <taxon>eudicotyledons</taxon>
        <taxon>Gunneridae</taxon>
        <taxon>Pentapetalae</taxon>
        <taxon>rosids</taxon>
        <taxon>malvids</taxon>
        <taxon>Brassicales</taxon>
        <taxon>Brassicaceae</taxon>
        <taxon>Camelineae</taxon>
        <taxon>Arabidopsis</taxon>
    </lineage>
</organism>
<protein>
    <recommendedName>
        <fullName>Protein STABILIZED1</fullName>
    </recommendedName>
    <alternativeName>
        <fullName>Pre-mRNA processing factor 6-like protein</fullName>
    </alternativeName>
    <alternativeName>
        <fullName>Protein EMBRYO DEFECTIVE 2770</fullName>
    </alternativeName>
</protein>
<dbReference type="EMBL" id="AF071527">
    <property type="protein sequence ID" value="AAD11585.1"/>
    <property type="molecule type" value="Genomic_DNA"/>
</dbReference>
<dbReference type="EMBL" id="AL161496">
    <property type="protein sequence ID" value="CAB77828.1"/>
    <property type="molecule type" value="Genomic_DNA"/>
</dbReference>
<dbReference type="EMBL" id="CP002687">
    <property type="protein sequence ID" value="AEE82320.1"/>
    <property type="molecule type" value="Genomic_DNA"/>
</dbReference>
<dbReference type="EMBL" id="CP002687">
    <property type="protein sequence ID" value="ANM67973.1"/>
    <property type="molecule type" value="Genomic_DNA"/>
</dbReference>
<dbReference type="EMBL" id="CP002687">
    <property type="protein sequence ID" value="ANM67974.1"/>
    <property type="molecule type" value="Genomic_DNA"/>
</dbReference>
<dbReference type="EMBL" id="AY059720">
    <property type="protein sequence ID" value="AAL24077.1"/>
    <property type="molecule type" value="mRNA"/>
</dbReference>
<dbReference type="EMBL" id="AY142510">
    <property type="protein sequence ID" value="AAN13111.1"/>
    <property type="molecule type" value="mRNA"/>
</dbReference>
<dbReference type="EMBL" id="AK226702">
    <property type="protein sequence ID" value="BAE98809.1"/>
    <property type="molecule type" value="mRNA"/>
</dbReference>
<dbReference type="PIR" id="E85043">
    <property type="entry name" value="E85043"/>
</dbReference>
<dbReference type="RefSeq" id="NP_001319859.1">
    <property type="nucleotide sequence ID" value="NM_001340448.1"/>
</dbReference>
<dbReference type="RefSeq" id="NP_001329764.1">
    <property type="nucleotide sequence ID" value="NM_001340449.1"/>
</dbReference>
<dbReference type="RefSeq" id="NP_192252.1">
    <property type="nucleotide sequence ID" value="NM_116581.2"/>
</dbReference>
<dbReference type="SMR" id="Q9ZT71"/>
<dbReference type="BioGRID" id="13216">
    <property type="interactions" value="2"/>
</dbReference>
<dbReference type="FunCoup" id="Q9ZT71">
    <property type="interactions" value="4892"/>
</dbReference>
<dbReference type="IntAct" id="Q9ZT71">
    <property type="interactions" value="1"/>
</dbReference>
<dbReference type="MINT" id="Q9ZT71"/>
<dbReference type="STRING" id="3702.Q9ZT71"/>
<dbReference type="GlyGen" id="Q9ZT71">
    <property type="glycosylation" value="1 site"/>
</dbReference>
<dbReference type="iPTMnet" id="Q9ZT71"/>
<dbReference type="PaxDb" id="3702-AT4G03430.1"/>
<dbReference type="ProteomicsDB" id="228262"/>
<dbReference type="EnsemblPlants" id="AT4G03430.1">
    <property type="protein sequence ID" value="AT4G03430.1"/>
    <property type="gene ID" value="AT4G03430"/>
</dbReference>
<dbReference type="EnsemblPlants" id="AT4G03430.2">
    <property type="protein sequence ID" value="AT4G03430.2"/>
    <property type="gene ID" value="AT4G03430"/>
</dbReference>
<dbReference type="EnsemblPlants" id="AT4G03430.3">
    <property type="protein sequence ID" value="AT4G03430.3"/>
    <property type="gene ID" value="AT4G03430"/>
</dbReference>
<dbReference type="GeneID" id="827925"/>
<dbReference type="Gramene" id="AT4G03430.1">
    <property type="protein sequence ID" value="AT4G03430.1"/>
    <property type="gene ID" value="AT4G03430"/>
</dbReference>
<dbReference type="Gramene" id="AT4G03430.2">
    <property type="protein sequence ID" value="AT4G03430.2"/>
    <property type="gene ID" value="AT4G03430"/>
</dbReference>
<dbReference type="Gramene" id="AT4G03430.3">
    <property type="protein sequence ID" value="AT4G03430.3"/>
    <property type="gene ID" value="AT4G03430"/>
</dbReference>
<dbReference type="KEGG" id="ath:AT4G03430"/>
<dbReference type="Araport" id="AT4G03430"/>
<dbReference type="TAIR" id="AT4G03430">
    <property type="gene designation" value="STA1"/>
</dbReference>
<dbReference type="eggNOG" id="KOG0495">
    <property type="taxonomic scope" value="Eukaryota"/>
</dbReference>
<dbReference type="HOGENOM" id="CLU_007010_0_0_1"/>
<dbReference type="InParanoid" id="Q9ZT71"/>
<dbReference type="OMA" id="DGWAWYY"/>
<dbReference type="PhylomeDB" id="Q9ZT71"/>
<dbReference type="CD-CODE" id="4299E36E">
    <property type="entry name" value="Nucleolus"/>
</dbReference>
<dbReference type="PRO" id="PR:Q9ZT71"/>
<dbReference type="Proteomes" id="UP000006548">
    <property type="component" value="Chromosome 4"/>
</dbReference>
<dbReference type="ExpressionAtlas" id="Q9ZT71">
    <property type="expression patterns" value="baseline and differential"/>
</dbReference>
<dbReference type="GO" id="GO:0015030">
    <property type="term" value="C:Cajal body"/>
    <property type="evidence" value="ECO:0000314"/>
    <property type="project" value="UniProtKB"/>
</dbReference>
<dbReference type="GO" id="GO:0005634">
    <property type="term" value="C:nucleus"/>
    <property type="evidence" value="ECO:0000314"/>
    <property type="project" value="TAIR"/>
</dbReference>
<dbReference type="GO" id="GO:0005681">
    <property type="term" value="C:spliceosomal complex"/>
    <property type="evidence" value="ECO:0000314"/>
    <property type="project" value="UniProtKB"/>
</dbReference>
<dbReference type="GO" id="GO:0080188">
    <property type="term" value="P:gene silencing by siRNA-directed DNA methylation"/>
    <property type="evidence" value="ECO:0000315"/>
    <property type="project" value="UniProtKB"/>
</dbReference>
<dbReference type="GO" id="GO:0000398">
    <property type="term" value="P:mRNA splicing, via spliceosome"/>
    <property type="evidence" value="ECO:0000250"/>
    <property type="project" value="TAIR"/>
</dbReference>
<dbReference type="GO" id="GO:2000636">
    <property type="term" value="P:positive regulation of primary miRNA processing"/>
    <property type="evidence" value="ECO:0000315"/>
    <property type="project" value="UniProtKB"/>
</dbReference>
<dbReference type="GO" id="GO:0009409">
    <property type="term" value="P:response to cold"/>
    <property type="evidence" value="ECO:0000315"/>
    <property type="project" value="TAIR"/>
</dbReference>
<dbReference type="GO" id="GO:0009845">
    <property type="term" value="P:seed germination"/>
    <property type="evidence" value="ECO:0000315"/>
    <property type="project" value="TAIR"/>
</dbReference>
<dbReference type="FunFam" id="1.25.40.10:FF:000256">
    <property type="entry name" value="Probable pre-mRNA splicing factor prp1"/>
    <property type="match status" value="1"/>
</dbReference>
<dbReference type="FunFam" id="1.25.40.10:FF:000384">
    <property type="entry name" value="Probable pre-mRNA splicing factor prp1"/>
    <property type="match status" value="1"/>
</dbReference>
<dbReference type="FunFam" id="1.25.40.10:FF:000800">
    <property type="entry name" value="Protein STABILIZED1"/>
    <property type="match status" value="1"/>
</dbReference>
<dbReference type="FunFam" id="1.25.40.10:FF:000304">
    <property type="entry name" value="Putative Pre-mRNA-splicing factor prp1"/>
    <property type="match status" value="1"/>
</dbReference>
<dbReference type="Gene3D" id="1.25.40.10">
    <property type="entry name" value="Tetratricopeptide repeat domain"/>
    <property type="match status" value="4"/>
</dbReference>
<dbReference type="InterPro" id="IPR003107">
    <property type="entry name" value="HAT"/>
</dbReference>
<dbReference type="InterPro" id="IPR010491">
    <property type="entry name" value="PRP1_N"/>
</dbReference>
<dbReference type="InterPro" id="IPR045075">
    <property type="entry name" value="Syf1-like"/>
</dbReference>
<dbReference type="InterPro" id="IPR011990">
    <property type="entry name" value="TPR-like_helical_dom_sf"/>
</dbReference>
<dbReference type="InterPro" id="IPR019734">
    <property type="entry name" value="TPR_rpt"/>
</dbReference>
<dbReference type="InterPro" id="IPR000626">
    <property type="entry name" value="Ubiquitin-like_dom"/>
</dbReference>
<dbReference type="PANTHER" id="PTHR11246">
    <property type="entry name" value="PRE-MRNA SPLICING FACTOR"/>
    <property type="match status" value="1"/>
</dbReference>
<dbReference type="PANTHER" id="PTHR11246:SF1">
    <property type="entry name" value="PRE-MRNA-PROCESSING FACTOR 6"/>
    <property type="match status" value="1"/>
</dbReference>
<dbReference type="Pfam" id="PF23240">
    <property type="entry name" value="HAT_PRP39_N"/>
    <property type="match status" value="1"/>
</dbReference>
<dbReference type="Pfam" id="PF06424">
    <property type="entry name" value="PRP1_N"/>
    <property type="match status" value="1"/>
</dbReference>
<dbReference type="Pfam" id="PF14559">
    <property type="entry name" value="TPR_19"/>
    <property type="match status" value="1"/>
</dbReference>
<dbReference type="SMART" id="SM00386">
    <property type="entry name" value="HAT"/>
    <property type="match status" value="12"/>
</dbReference>
<dbReference type="SMART" id="SM00028">
    <property type="entry name" value="TPR"/>
    <property type="match status" value="4"/>
</dbReference>
<dbReference type="SUPFAM" id="SSF48452">
    <property type="entry name" value="TPR-like"/>
    <property type="match status" value="3"/>
</dbReference>
<dbReference type="PROSITE" id="PS50293">
    <property type="entry name" value="TPR_REGION"/>
    <property type="match status" value="2"/>
</dbReference>
<dbReference type="PROSITE" id="PS50053">
    <property type="entry name" value="UBIQUITIN_2"/>
    <property type="match status" value="1"/>
</dbReference>